<reference key="1">
    <citation type="submission" date="1998-03" db="EMBL/GenBank/DDBJ databases">
        <title>14-3-3 protein regulation of protozoan mannitol metabolism via inhibition of mannitol-1-phosphate dehydrogenase.</title>
        <authorList>
            <person name="Myers R.W."/>
            <person name="Liberator P.A."/>
            <person name="Allocco J.J."/>
            <person name="Anderson J.W."/>
            <person name="Sardana M.K."/>
            <person name="Wood T.L."/>
            <person name="Griffin P.R."/>
            <person name="Fujioka H."/>
            <person name="Schmatz D.M."/>
        </authorList>
    </citation>
    <scope>NUCLEOTIDE SEQUENCE [MRNA]</scope>
    <source>
        <strain>LS18</strain>
    </source>
</reference>
<proteinExistence type="evidence at transcript level"/>
<sequence>MIEDIKTLREEHVYRAKLAEQAERYDEMAEAMKNLVENCLDQNNSPPGAKGDELTVEERNLLSVAYKNAVGARRASWRIISSVEQKEANRNHMANKALAASYRQKVENELNKICQEILTLLTDKLLPRTTDSESRVFYFKMKGDYYRYISEFSNEEGKKASAEQAEESYKRATDTAEAELPSTHPIRLGLALNYSVFYYEILNQPQKACEMAKLAFDDAITEFDSVSEDSYKDSTLIMQLLRDNLTLWTSDLQTQEQQQQPVGEGAEAPKVEATEQQ</sequence>
<accession>O96436</accession>
<dbReference type="EMBL" id="AF055715">
    <property type="protein sequence ID" value="AAD02687.1"/>
    <property type="molecule type" value="mRNA"/>
</dbReference>
<dbReference type="RefSeq" id="XP_013229533.1">
    <property type="nucleotide sequence ID" value="XM_013374079.1"/>
</dbReference>
<dbReference type="SMR" id="O96436"/>
<dbReference type="GeneID" id="25250798"/>
<dbReference type="VEuPathDB" id="ToxoDB:ETH2_1456900"/>
<dbReference type="VEuPathDB" id="ToxoDB:ETH_00007980"/>
<dbReference type="OMA" id="KGCQLAR"/>
<dbReference type="OrthoDB" id="10260625at2759"/>
<dbReference type="CDD" id="cd08774">
    <property type="entry name" value="14-3-3"/>
    <property type="match status" value="1"/>
</dbReference>
<dbReference type="FunFam" id="1.20.190.20:FF:000001">
    <property type="entry name" value="14-3-3 gamma 1"/>
    <property type="match status" value="1"/>
</dbReference>
<dbReference type="Gene3D" id="1.20.190.20">
    <property type="entry name" value="14-3-3 domain"/>
    <property type="match status" value="1"/>
</dbReference>
<dbReference type="InterPro" id="IPR000308">
    <property type="entry name" value="14-3-3"/>
</dbReference>
<dbReference type="InterPro" id="IPR023409">
    <property type="entry name" value="14-3-3_CS"/>
</dbReference>
<dbReference type="InterPro" id="IPR036815">
    <property type="entry name" value="14-3-3_dom_sf"/>
</dbReference>
<dbReference type="InterPro" id="IPR023410">
    <property type="entry name" value="14-3-3_domain"/>
</dbReference>
<dbReference type="PANTHER" id="PTHR18860">
    <property type="entry name" value="14-3-3 PROTEIN"/>
    <property type="match status" value="1"/>
</dbReference>
<dbReference type="Pfam" id="PF00244">
    <property type="entry name" value="14-3-3"/>
    <property type="match status" value="1"/>
</dbReference>
<dbReference type="PIRSF" id="PIRSF000868">
    <property type="entry name" value="14-3-3"/>
    <property type="match status" value="1"/>
</dbReference>
<dbReference type="PRINTS" id="PR00305">
    <property type="entry name" value="1433ZETA"/>
</dbReference>
<dbReference type="SMART" id="SM00101">
    <property type="entry name" value="14_3_3"/>
    <property type="match status" value="1"/>
</dbReference>
<dbReference type="SUPFAM" id="SSF48445">
    <property type="entry name" value="14-3-3 protein"/>
    <property type="match status" value="1"/>
</dbReference>
<dbReference type="PROSITE" id="PS00796">
    <property type="entry name" value="1433_1"/>
    <property type="match status" value="1"/>
</dbReference>
<dbReference type="PROSITE" id="PS00797">
    <property type="entry name" value="1433_2"/>
    <property type="match status" value="1"/>
</dbReference>
<organism>
    <name type="scientific">Eimeria tenella</name>
    <name type="common">Coccidian parasite</name>
    <dbReference type="NCBI Taxonomy" id="5802"/>
    <lineage>
        <taxon>Eukaryota</taxon>
        <taxon>Sar</taxon>
        <taxon>Alveolata</taxon>
        <taxon>Apicomplexa</taxon>
        <taxon>Conoidasida</taxon>
        <taxon>Coccidia</taxon>
        <taxon>Eucoccidiorida</taxon>
        <taxon>Eimeriorina</taxon>
        <taxon>Eimeriidae</taxon>
        <taxon>Eimeria</taxon>
    </lineage>
</organism>
<evidence type="ECO:0000256" key="1">
    <source>
        <dbReference type="SAM" id="MobiDB-lite"/>
    </source>
</evidence>
<evidence type="ECO:0000305" key="2"/>
<name>1433_EIMTE</name>
<feature type="chain" id="PRO_0000058656" description="14-3-3 protein">
    <location>
        <begin position="1"/>
        <end position="277"/>
    </location>
</feature>
<feature type="region of interest" description="Disordered" evidence="1">
    <location>
        <begin position="252"/>
        <end position="277"/>
    </location>
</feature>
<feature type="compositionally biased region" description="Basic and acidic residues" evidence="1">
    <location>
        <begin position="267"/>
        <end position="277"/>
    </location>
</feature>
<protein>
    <recommendedName>
        <fullName>14-3-3 protein</fullName>
    </recommendedName>
</protein>
<comment type="similarity">
    <text evidence="2">Belongs to the 14-3-3 family.</text>
</comment>